<gene>
    <name type="primary">19</name>
</gene>
<protein>
    <recommendedName>
        <fullName evidence="1">Endolysin</fullName>
        <ecNumber evidence="1">3.2.1.17</ecNumber>
    </recommendedName>
    <alternativeName>
        <fullName evidence="1">Lysis protein</fullName>
    </alternativeName>
    <alternativeName>
        <fullName evidence="1">Lysozyme</fullName>
    </alternativeName>
    <alternativeName>
        <fullName evidence="1">Muramidase</fullName>
    </alternativeName>
</protein>
<keyword id="KW-0002">3D-structure</keyword>
<keyword id="KW-0929">Antimicrobial</keyword>
<keyword id="KW-0081">Bacteriolytic enzyme</keyword>
<keyword id="KW-0204">Cytolysis</keyword>
<keyword id="KW-0903">Direct protein sequencing</keyword>
<keyword id="KW-0326">Glycosidase</keyword>
<keyword id="KW-0578">Host cell lysis by virus</keyword>
<keyword id="KW-1035">Host cytoplasm</keyword>
<keyword id="KW-0378">Hydrolase</keyword>
<keyword id="KW-1185">Reference proteome</keyword>
<keyword id="KW-1188">Viral release from host cell</keyword>
<organism>
    <name type="scientific">Salmonella phage P22</name>
    <name type="common">Bacteriophage P22</name>
    <dbReference type="NCBI Taxonomy" id="10754"/>
    <lineage>
        <taxon>Viruses</taxon>
        <taxon>Duplodnaviria</taxon>
        <taxon>Heunggongvirae</taxon>
        <taxon>Uroviricota</taxon>
        <taxon>Caudoviricetes</taxon>
        <taxon>Lederbergvirus</taxon>
    </lineage>
</organism>
<dbReference type="EC" id="3.2.1.17" evidence="1"/>
<dbReference type="EMBL" id="M10997">
    <property type="protein sequence ID" value="AAA32266.1"/>
    <property type="molecule type" value="Genomic_DNA"/>
</dbReference>
<dbReference type="EMBL" id="AF217253">
    <property type="protein sequence ID" value="AAF75040.1"/>
    <property type="molecule type" value="Genomic_DNA"/>
</dbReference>
<dbReference type="EMBL" id="BK000583">
    <property type="protein sequence ID" value="DAA01040.1"/>
    <property type="molecule type" value="Genomic_DNA"/>
</dbReference>
<dbReference type="EMBL" id="J04356">
    <property type="protein sequence ID" value="AAA88340.1"/>
    <property type="molecule type" value="Genomic_DNA"/>
</dbReference>
<dbReference type="PIR" id="S22904">
    <property type="entry name" value="LZBP22"/>
</dbReference>
<dbReference type="RefSeq" id="NP_059622.1">
    <property type="nucleotide sequence ID" value="NC_002371.2"/>
</dbReference>
<dbReference type="PDB" id="2ANV">
    <property type="method" value="X-ray"/>
    <property type="resolution" value="1.04 A"/>
    <property type="chains" value="A/B=1-146"/>
</dbReference>
<dbReference type="PDB" id="2ANX">
    <property type="method" value="X-ray"/>
    <property type="resolution" value="1.04 A"/>
    <property type="chains" value="A/B=1-146"/>
</dbReference>
<dbReference type="PDBsum" id="2ANV"/>
<dbReference type="PDBsum" id="2ANX"/>
<dbReference type="SMR" id="P09963"/>
<dbReference type="CAZy" id="GH24">
    <property type="family name" value="Glycoside Hydrolase Family 24"/>
</dbReference>
<dbReference type="GeneID" id="1262838"/>
<dbReference type="KEGG" id="vg:1262838"/>
<dbReference type="OrthoDB" id="18172at10239"/>
<dbReference type="EvolutionaryTrace" id="P09963"/>
<dbReference type="Proteomes" id="UP000001795">
    <property type="component" value="Segment"/>
</dbReference>
<dbReference type="Proteomes" id="UP000007960">
    <property type="component" value="Segment"/>
</dbReference>
<dbReference type="GO" id="GO:0030430">
    <property type="term" value="C:host cell cytoplasm"/>
    <property type="evidence" value="ECO:0007669"/>
    <property type="project" value="UniProtKB-SubCell"/>
</dbReference>
<dbReference type="GO" id="GO:0003796">
    <property type="term" value="F:lysozyme activity"/>
    <property type="evidence" value="ECO:0007669"/>
    <property type="project" value="UniProtKB-UniRule"/>
</dbReference>
<dbReference type="GO" id="GO:0016998">
    <property type="term" value="P:cell wall macromolecule catabolic process"/>
    <property type="evidence" value="ECO:0007669"/>
    <property type="project" value="InterPro"/>
</dbReference>
<dbReference type="GO" id="GO:0042742">
    <property type="term" value="P:defense response to bacterium"/>
    <property type="evidence" value="ECO:0007669"/>
    <property type="project" value="UniProtKB-KW"/>
</dbReference>
<dbReference type="GO" id="GO:0009253">
    <property type="term" value="P:peptidoglycan catabolic process"/>
    <property type="evidence" value="ECO:0007669"/>
    <property type="project" value="UniProtKB-UniRule"/>
</dbReference>
<dbReference type="GO" id="GO:0044659">
    <property type="term" value="P:viral release from host cell by cytolysis"/>
    <property type="evidence" value="ECO:0007669"/>
    <property type="project" value="UniProtKB-UniRule"/>
</dbReference>
<dbReference type="CDD" id="cd00737">
    <property type="entry name" value="lyz_endolysin_autolysin"/>
    <property type="match status" value="1"/>
</dbReference>
<dbReference type="Gene3D" id="1.10.530.40">
    <property type="match status" value="1"/>
</dbReference>
<dbReference type="HAMAP" id="MF_04110">
    <property type="entry name" value="ENDOLYSIN_T4"/>
    <property type="match status" value="1"/>
</dbReference>
<dbReference type="InterPro" id="IPR051018">
    <property type="entry name" value="Bacteriophage_GH24"/>
</dbReference>
<dbReference type="InterPro" id="IPR033907">
    <property type="entry name" value="Endolysin_autolysin"/>
</dbReference>
<dbReference type="InterPro" id="IPR034690">
    <property type="entry name" value="Endolysin_T4_type"/>
</dbReference>
<dbReference type="InterPro" id="IPR002196">
    <property type="entry name" value="Glyco_hydro_24"/>
</dbReference>
<dbReference type="InterPro" id="IPR023346">
    <property type="entry name" value="Lysozyme-like_dom_sf"/>
</dbReference>
<dbReference type="InterPro" id="IPR023347">
    <property type="entry name" value="Lysozyme_dom_sf"/>
</dbReference>
<dbReference type="PANTHER" id="PTHR38107">
    <property type="match status" value="1"/>
</dbReference>
<dbReference type="PANTHER" id="PTHR38107:SF3">
    <property type="entry name" value="LYSOZYME RRRD-RELATED"/>
    <property type="match status" value="1"/>
</dbReference>
<dbReference type="Pfam" id="PF00959">
    <property type="entry name" value="Phage_lysozyme"/>
    <property type="match status" value="1"/>
</dbReference>
<dbReference type="SUPFAM" id="SSF53955">
    <property type="entry name" value="Lysozyme-like"/>
    <property type="match status" value="1"/>
</dbReference>
<feature type="chain" id="PRO_0000218102" description="Endolysin">
    <location>
        <begin position="1"/>
        <end position="146"/>
    </location>
</feature>
<feature type="active site" description="Proton donor/acceptor" evidence="1">
    <location>
        <position position="16"/>
    </location>
</feature>
<feature type="active site" description="Proton donor/acceptor" evidence="1">
    <location>
        <position position="25"/>
    </location>
</feature>
<feature type="helix" evidence="2">
    <location>
        <begin position="6"/>
        <end position="16"/>
    </location>
</feature>
<feature type="strand" evidence="2">
    <location>
        <begin position="19"/>
        <end position="24"/>
    </location>
</feature>
<feature type="strand" evidence="2">
    <location>
        <begin position="30"/>
        <end position="33"/>
    </location>
</feature>
<feature type="helix" evidence="2">
    <location>
        <begin position="53"/>
        <end position="63"/>
    </location>
</feature>
<feature type="helix" evidence="2">
    <location>
        <begin position="65"/>
        <end position="74"/>
    </location>
</feature>
<feature type="helix" evidence="2">
    <location>
        <begin position="81"/>
        <end position="94"/>
    </location>
</feature>
<feature type="helix" evidence="2">
    <location>
        <begin position="96"/>
        <end position="100"/>
    </location>
</feature>
<feature type="helix" evidence="2">
    <location>
        <begin position="103"/>
        <end position="109"/>
    </location>
</feature>
<feature type="helix" evidence="2">
    <location>
        <begin position="113"/>
        <end position="119"/>
    </location>
</feature>
<feature type="helix" evidence="2">
    <location>
        <begin position="120"/>
        <end position="122"/>
    </location>
</feature>
<feature type="turn" evidence="2">
    <location>
        <begin position="130"/>
        <end position="133"/>
    </location>
</feature>
<feature type="helix" evidence="2">
    <location>
        <begin position="134"/>
        <end position="145"/>
    </location>
</feature>
<comment type="function">
    <text evidence="1">Endolysin with lysozyme activity that degrades host peptidoglycans and participates with the holin and spanin proteins in the sequential events which lead to the programmed host cell lysis releasing the mature viral particles. Once the holin has permeabilized the host cell membrane, the endolysin can reach the periplasm and break down the peptidoglycan layer.</text>
</comment>
<comment type="catalytic activity">
    <reaction evidence="1">
        <text>Hydrolysis of (1-&gt;4)-beta-linkages between N-acetylmuramic acid and N-acetyl-D-glucosamine residues in a peptidoglycan and between N-acetyl-D-glucosamine residues in chitodextrins.</text>
        <dbReference type="EC" id="3.2.1.17"/>
    </reaction>
</comment>
<comment type="subcellular location">
    <subcellularLocation>
        <location evidence="1">Host cytoplasm</location>
    </subcellularLocation>
    <text evidence="1">The endolysin is cytoplasmic, but can reach the periplasmic space with the help of the holins which disrupt the host cell membrane.</text>
</comment>
<comment type="similarity">
    <text evidence="1">Belongs to the glycosyl hydrolase 24 family.</text>
</comment>
<evidence type="ECO:0000255" key="1">
    <source>
        <dbReference type="HAMAP-Rule" id="MF_04110"/>
    </source>
</evidence>
<evidence type="ECO:0007829" key="2">
    <source>
        <dbReference type="PDB" id="2ANV"/>
    </source>
</evidence>
<organismHost>
    <name type="scientific">Salmonella typhimurium</name>
    <dbReference type="NCBI Taxonomy" id="90371"/>
</organismHost>
<name>ENLYS_BPP22</name>
<sequence>MMQISSNGITRLKREEGERLKAYSDSRGIPTIGVGHTGKVDGNSVASGMTITAEKSSELLKEDLQWVEDAISSLVRVPLNQNQYDALCSLIFNIGKSAFAGSTVLRQLNLKNYQAAADAFLLWKKAGKDPDILLPRRRRERALFLS</sequence>
<accession>P09963</accession>
<accession>Q7PCD5</accession>
<proteinExistence type="evidence at protein level"/>
<reference key="1">
    <citation type="journal article" date="1985" name="Virology">
        <title>Phage P22 lysis genes: nucleotide sequences and functional relationships with T4 and lambda genes.</title>
        <authorList>
            <person name="Rennell D."/>
            <person name="Poteete A.R."/>
        </authorList>
    </citation>
    <scope>NUCLEOTIDE SEQUENCE [GENOMIC DNA]</scope>
    <scope>PARTIAL PROTEIN SEQUENCE</scope>
</reference>
<reference key="2">
    <citation type="journal article" date="2000" name="J. Bacteriol.">
        <title>Sequence of the genome of Salmonella bacteriophage P22.</title>
        <authorList>
            <person name="Vander Byl C.S."/>
            <person name="Kropinski A.M.B."/>
        </authorList>
    </citation>
    <scope>NUCLEOTIDE SEQUENCE [LARGE SCALE GENOMIC DNA]</scope>
</reference>
<reference key="3">
    <citation type="journal article" date="2003" name="J. Bacteriol.">
        <title>Corrected sequence of the bacteriophage P22 genome.</title>
        <authorList>
            <person name="Pedulla M.L."/>
            <person name="Ford M.E."/>
            <person name="Karthikeyan T."/>
            <person name="Houtz J.M."/>
            <person name="Hendrix R.W."/>
            <person name="Hatfull G.F."/>
            <person name="Poteete A.R."/>
            <person name="Gilcrease E.B."/>
            <person name="Winn-Stapley D.A."/>
            <person name="Casjens S.R."/>
        </authorList>
    </citation>
    <scope>NUCLEOTIDE SEQUENCE [LARGE SCALE GENOMIC DNA]</scope>
</reference>
<reference key="4">
    <citation type="journal article" date="1989" name="Virology">
        <title>Nucleotide sequence of the bacteriophage P22 gene 19 to 3 region: identification of a new gene required for lysis.</title>
        <authorList>
            <person name="Casjens S."/>
            <person name="Eppler K."/>
            <person name="Parr R."/>
            <person name="Poteete A.R."/>
        </authorList>
    </citation>
    <scope>NUCLEOTIDE SEQUENCE [GENOMIC DNA] OF 111-146</scope>
</reference>
<reference key="5">
    <citation type="journal article" date="2006" name="Acta Crystallogr. D">
        <title>Extension to 2268 atoms of direct methods in the ab initio determination of the unknown structure of bacteriophage P22 lysozyme.</title>
        <authorList>
            <person name="Mooers B.H."/>
            <person name="Matthews B.W."/>
        </authorList>
    </citation>
    <scope>X-RAY CRYSTALLOGRAPHY (1.04 ANGSTROMS)</scope>
</reference>